<comment type="catalytic activity">
    <reaction evidence="1">
        <text>(2R)-3-phosphoglycerate + ATP = (2R)-3-phospho-glyceroyl phosphate + ADP</text>
        <dbReference type="Rhea" id="RHEA:14801"/>
        <dbReference type="ChEBI" id="CHEBI:30616"/>
        <dbReference type="ChEBI" id="CHEBI:57604"/>
        <dbReference type="ChEBI" id="CHEBI:58272"/>
        <dbReference type="ChEBI" id="CHEBI:456216"/>
        <dbReference type="EC" id="2.7.2.3"/>
    </reaction>
</comment>
<comment type="pathway">
    <text evidence="1">Carbohydrate degradation; glycolysis; pyruvate from D-glyceraldehyde 3-phosphate: step 2/5.</text>
</comment>
<comment type="subunit">
    <text evidence="1">Monomer.</text>
</comment>
<comment type="subcellular location">
    <subcellularLocation>
        <location evidence="1">Cytoplasm</location>
    </subcellularLocation>
</comment>
<comment type="similarity">
    <text evidence="1">Belongs to the phosphoglycerate kinase family.</text>
</comment>
<keyword id="KW-0067">ATP-binding</keyword>
<keyword id="KW-0963">Cytoplasm</keyword>
<keyword id="KW-0324">Glycolysis</keyword>
<keyword id="KW-0418">Kinase</keyword>
<keyword id="KW-0547">Nucleotide-binding</keyword>
<keyword id="KW-0808">Transferase</keyword>
<evidence type="ECO:0000255" key="1">
    <source>
        <dbReference type="HAMAP-Rule" id="MF_00145"/>
    </source>
</evidence>
<organism>
    <name type="scientific">Chlamydia trachomatis serovar L2b (strain UCH-1/proctitis)</name>
    <dbReference type="NCBI Taxonomy" id="471473"/>
    <lineage>
        <taxon>Bacteria</taxon>
        <taxon>Pseudomonadati</taxon>
        <taxon>Chlamydiota</taxon>
        <taxon>Chlamydiia</taxon>
        <taxon>Chlamydiales</taxon>
        <taxon>Chlamydiaceae</taxon>
        <taxon>Chlamydia/Chlamydophila group</taxon>
        <taxon>Chlamydia</taxon>
    </lineage>
</organism>
<name>PGK_CHLTB</name>
<accession>B0BAE8</accession>
<sequence>MDKLSIRDLSLEGKKVLVRVDFNVPIKDGKILDDVRIRSAMPTIHYLLKQDAAVILVSHLGRPKGGVFEEAYSLAPIVPVLEGYLGHHVPLSPDCIGEVARQAVAQLSPGRVLLLENVRFHKGEEHPDEDPSFAIELAAYADFYVNDAFGTSHRKHASVYRVPQLFPDRAAAGFLMEKELEFLGQHLLVEPKRPFTAILGGAKMSSKIGVIEALLSCVDHLVLAGGMGYTFLRAMNRQVGNSLVEESGIPLAKKVLEKAQALGVKIHLPVDAKVAKQCDSGEDWRELSIQEGIPEGLAGFDIGAQTIELFSKVIQESATIFWNGPVGVYEVPPFDQGSKAIAQCLASHSSAVTVVGGGDAAAVVALAGCTSQISHVSTGGGASLEFLEKGSLPGTEILSPAQS</sequence>
<reference key="1">
    <citation type="journal article" date="2008" name="Genome Res.">
        <title>Chlamydia trachomatis: genome sequence analysis of lymphogranuloma venereum isolates.</title>
        <authorList>
            <person name="Thomson N.R."/>
            <person name="Holden M.T.G."/>
            <person name="Carder C."/>
            <person name="Lennard N."/>
            <person name="Lockey S.J."/>
            <person name="Marsh P."/>
            <person name="Skipp P."/>
            <person name="O'Connor C.D."/>
            <person name="Goodhead I."/>
            <person name="Norbertzcak H."/>
            <person name="Harris B."/>
            <person name="Ormond D."/>
            <person name="Rance R."/>
            <person name="Quail M.A."/>
            <person name="Parkhill J."/>
            <person name="Stephens R.S."/>
            <person name="Clarke I.N."/>
        </authorList>
    </citation>
    <scope>NUCLEOTIDE SEQUENCE [LARGE SCALE GENOMIC DNA]</scope>
    <source>
        <strain>UCH-1/proctitis</strain>
    </source>
</reference>
<protein>
    <recommendedName>
        <fullName evidence="1">Phosphoglycerate kinase</fullName>
        <ecNumber evidence="1">2.7.2.3</ecNumber>
    </recommendedName>
</protein>
<proteinExistence type="inferred from homology"/>
<feature type="chain" id="PRO_1000096329" description="Phosphoglycerate kinase">
    <location>
        <begin position="1"/>
        <end position="403"/>
    </location>
</feature>
<feature type="binding site" evidence="1">
    <location>
        <begin position="21"/>
        <end position="23"/>
    </location>
    <ligand>
        <name>substrate</name>
    </ligand>
</feature>
<feature type="binding site" evidence="1">
    <location>
        <position position="36"/>
    </location>
    <ligand>
        <name>substrate</name>
    </ligand>
</feature>
<feature type="binding site" evidence="1">
    <location>
        <begin position="59"/>
        <end position="62"/>
    </location>
    <ligand>
        <name>substrate</name>
    </ligand>
</feature>
<feature type="binding site" evidence="1">
    <location>
        <position position="119"/>
    </location>
    <ligand>
        <name>substrate</name>
    </ligand>
</feature>
<feature type="binding site" evidence="1">
    <location>
        <position position="154"/>
    </location>
    <ligand>
        <name>substrate</name>
    </ligand>
</feature>
<feature type="binding site" evidence="1">
    <location>
        <position position="207"/>
    </location>
    <ligand>
        <name>ATP</name>
        <dbReference type="ChEBI" id="CHEBI:30616"/>
    </ligand>
</feature>
<feature type="binding site" evidence="1">
    <location>
        <position position="299"/>
    </location>
    <ligand>
        <name>ATP</name>
        <dbReference type="ChEBI" id="CHEBI:30616"/>
    </ligand>
</feature>
<feature type="binding site" evidence="1">
    <location>
        <position position="330"/>
    </location>
    <ligand>
        <name>ATP</name>
        <dbReference type="ChEBI" id="CHEBI:30616"/>
    </ligand>
</feature>
<feature type="binding site" evidence="1">
    <location>
        <begin position="357"/>
        <end position="360"/>
    </location>
    <ligand>
        <name>ATP</name>
        <dbReference type="ChEBI" id="CHEBI:30616"/>
    </ligand>
</feature>
<dbReference type="EC" id="2.7.2.3" evidence="1"/>
<dbReference type="EMBL" id="AM884177">
    <property type="protein sequence ID" value="CAP06460.1"/>
    <property type="molecule type" value="Genomic_DNA"/>
</dbReference>
<dbReference type="RefSeq" id="WP_009873302.1">
    <property type="nucleotide sequence ID" value="NC_010280.2"/>
</dbReference>
<dbReference type="SMR" id="B0BAE8"/>
<dbReference type="KEGG" id="ctl:CTLon_0062"/>
<dbReference type="HOGENOM" id="CLU_025427_0_2_0"/>
<dbReference type="UniPathway" id="UPA00109">
    <property type="reaction ID" value="UER00185"/>
</dbReference>
<dbReference type="Proteomes" id="UP001154401">
    <property type="component" value="Chromosome"/>
</dbReference>
<dbReference type="GO" id="GO:0005829">
    <property type="term" value="C:cytosol"/>
    <property type="evidence" value="ECO:0007669"/>
    <property type="project" value="TreeGrafter"/>
</dbReference>
<dbReference type="GO" id="GO:0043531">
    <property type="term" value="F:ADP binding"/>
    <property type="evidence" value="ECO:0007669"/>
    <property type="project" value="TreeGrafter"/>
</dbReference>
<dbReference type="GO" id="GO:0005524">
    <property type="term" value="F:ATP binding"/>
    <property type="evidence" value="ECO:0007669"/>
    <property type="project" value="UniProtKB-KW"/>
</dbReference>
<dbReference type="GO" id="GO:0004618">
    <property type="term" value="F:phosphoglycerate kinase activity"/>
    <property type="evidence" value="ECO:0007669"/>
    <property type="project" value="UniProtKB-UniRule"/>
</dbReference>
<dbReference type="GO" id="GO:0006094">
    <property type="term" value="P:gluconeogenesis"/>
    <property type="evidence" value="ECO:0007669"/>
    <property type="project" value="TreeGrafter"/>
</dbReference>
<dbReference type="GO" id="GO:0006096">
    <property type="term" value="P:glycolytic process"/>
    <property type="evidence" value="ECO:0007669"/>
    <property type="project" value="UniProtKB-UniRule"/>
</dbReference>
<dbReference type="CDD" id="cd00318">
    <property type="entry name" value="Phosphoglycerate_kinase"/>
    <property type="match status" value="1"/>
</dbReference>
<dbReference type="FunFam" id="3.40.50.1260:FF:000007">
    <property type="entry name" value="Phosphoglycerate kinase"/>
    <property type="match status" value="1"/>
</dbReference>
<dbReference type="FunFam" id="3.40.50.1260:FF:000011">
    <property type="entry name" value="Phosphoglycerate kinase"/>
    <property type="match status" value="1"/>
</dbReference>
<dbReference type="Gene3D" id="3.40.50.1260">
    <property type="entry name" value="Phosphoglycerate kinase, N-terminal domain"/>
    <property type="match status" value="2"/>
</dbReference>
<dbReference type="HAMAP" id="MF_00145">
    <property type="entry name" value="Phosphoglyc_kinase"/>
    <property type="match status" value="1"/>
</dbReference>
<dbReference type="InterPro" id="IPR001576">
    <property type="entry name" value="Phosphoglycerate_kinase"/>
</dbReference>
<dbReference type="InterPro" id="IPR015911">
    <property type="entry name" value="Phosphoglycerate_kinase_CS"/>
</dbReference>
<dbReference type="InterPro" id="IPR015824">
    <property type="entry name" value="Phosphoglycerate_kinase_N"/>
</dbReference>
<dbReference type="InterPro" id="IPR036043">
    <property type="entry name" value="Phosphoglycerate_kinase_sf"/>
</dbReference>
<dbReference type="PANTHER" id="PTHR11406">
    <property type="entry name" value="PHOSPHOGLYCERATE KINASE"/>
    <property type="match status" value="1"/>
</dbReference>
<dbReference type="PANTHER" id="PTHR11406:SF23">
    <property type="entry name" value="PHOSPHOGLYCERATE KINASE 1, CHLOROPLASTIC-RELATED"/>
    <property type="match status" value="1"/>
</dbReference>
<dbReference type="Pfam" id="PF00162">
    <property type="entry name" value="PGK"/>
    <property type="match status" value="1"/>
</dbReference>
<dbReference type="PIRSF" id="PIRSF000724">
    <property type="entry name" value="Pgk"/>
    <property type="match status" value="1"/>
</dbReference>
<dbReference type="PRINTS" id="PR00477">
    <property type="entry name" value="PHGLYCKINASE"/>
</dbReference>
<dbReference type="SUPFAM" id="SSF53748">
    <property type="entry name" value="Phosphoglycerate kinase"/>
    <property type="match status" value="1"/>
</dbReference>
<dbReference type="PROSITE" id="PS00111">
    <property type="entry name" value="PGLYCERATE_KINASE"/>
    <property type="match status" value="1"/>
</dbReference>
<gene>
    <name evidence="1" type="primary">pgk</name>
    <name type="ordered locus">CTLon_0062</name>
</gene>